<proteinExistence type="inferred from homology"/>
<keyword id="KW-0028">Amino-acid biosynthesis</keyword>
<keyword id="KW-0963">Cytoplasm</keyword>
<keyword id="KW-0413">Isomerase</keyword>
<keyword id="KW-0457">Lysine biosynthesis</keyword>
<gene>
    <name evidence="1" type="primary">dapF</name>
    <name type="ordered locus">RHA1_ro06777</name>
</gene>
<evidence type="ECO:0000255" key="1">
    <source>
        <dbReference type="HAMAP-Rule" id="MF_00197"/>
    </source>
</evidence>
<feature type="chain" id="PRO_1000011951" description="Diaminopimelate epimerase">
    <location>
        <begin position="1"/>
        <end position="289"/>
    </location>
</feature>
<feature type="active site" description="Proton donor" evidence="1">
    <location>
        <position position="87"/>
    </location>
</feature>
<feature type="active site" description="Proton acceptor" evidence="1">
    <location>
        <position position="226"/>
    </location>
</feature>
<feature type="binding site" evidence="1">
    <location>
        <position position="11"/>
    </location>
    <ligand>
        <name>substrate</name>
    </ligand>
</feature>
<feature type="binding site" evidence="1">
    <location>
        <position position="78"/>
    </location>
    <ligand>
        <name>substrate</name>
    </ligand>
</feature>
<feature type="binding site" evidence="1">
    <location>
        <begin position="88"/>
        <end position="89"/>
    </location>
    <ligand>
        <name>substrate</name>
    </ligand>
</feature>
<feature type="binding site" evidence="1">
    <location>
        <position position="163"/>
    </location>
    <ligand>
        <name>substrate</name>
    </ligand>
</feature>
<feature type="binding site" evidence="1">
    <location>
        <position position="199"/>
    </location>
    <ligand>
        <name>substrate</name>
    </ligand>
</feature>
<feature type="binding site" evidence="1">
    <location>
        <begin position="217"/>
        <end position="218"/>
    </location>
    <ligand>
        <name>substrate</name>
    </ligand>
</feature>
<feature type="binding site" evidence="1">
    <location>
        <begin position="227"/>
        <end position="228"/>
    </location>
    <ligand>
        <name>substrate</name>
    </ligand>
</feature>
<feature type="site" description="Could be important to modulate the pK values of the two catalytic cysteine residues" evidence="1">
    <location>
        <position position="165"/>
    </location>
</feature>
<feature type="site" description="Could be important to modulate the pK values of the two catalytic cysteine residues" evidence="1">
    <location>
        <position position="217"/>
    </location>
</feature>
<comment type="function">
    <text evidence="1">Catalyzes the stereoinversion of LL-2,6-diaminopimelate (L,L-DAP) to meso-diaminopimelate (meso-DAP), a precursor of L-lysine and an essential component of the bacterial peptidoglycan.</text>
</comment>
<comment type="catalytic activity">
    <reaction evidence="1">
        <text>(2S,6S)-2,6-diaminopimelate = meso-2,6-diaminopimelate</text>
        <dbReference type="Rhea" id="RHEA:15393"/>
        <dbReference type="ChEBI" id="CHEBI:57609"/>
        <dbReference type="ChEBI" id="CHEBI:57791"/>
        <dbReference type="EC" id="5.1.1.7"/>
    </reaction>
</comment>
<comment type="pathway">
    <text evidence="1">Amino-acid biosynthesis; L-lysine biosynthesis via DAP pathway; DL-2,6-diaminopimelate from LL-2,6-diaminopimelate: step 1/1.</text>
</comment>
<comment type="subunit">
    <text evidence="1">Homodimer.</text>
</comment>
<comment type="subcellular location">
    <subcellularLocation>
        <location evidence="1">Cytoplasm</location>
    </subcellularLocation>
</comment>
<comment type="similarity">
    <text evidence="1">Belongs to the diaminopimelate epimerase family.</text>
</comment>
<sequence length="289" mass="29624">MDFSKGHGTENDFVVLPDPDVRIDLSAPRVAALCDRRRGLGADGILRVAKAGALAGAGVLAELPDGTSEDDWFMDYRNADGSIAEMCGNGVRVFAHYLRAAGLESRDEFVVGSRAGGKPVIVHSADGAFGEVTVDMGVVRDLGTSAATIDGKVFNGIGIDVGNPHLACVDAHLTAASLSALDLTAAPGFDPGFFPHGVNVEILTRIDSGAVDMRVHERGVGETRSCGTGTVAAATAALRFDGADSGEVNVRIPGGQVTVAVSGGRATLRGPSVLVASGTLDDGWWNGLA</sequence>
<reference key="1">
    <citation type="journal article" date="2006" name="Proc. Natl. Acad. Sci. U.S.A.">
        <title>The complete genome of Rhodococcus sp. RHA1 provides insights into a catabolic powerhouse.</title>
        <authorList>
            <person name="McLeod M.P."/>
            <person name="Warren R.L."/>
            <person name="Hsiao W.W.L."/>
            <person name="Araki N."/>
            <person name="Myhre M."/>
            <person name="Fernandes C."/>
            <person name="Miyazawa D."/>
            <person name="Wong W."/>
            <person name="Lillquist A.L."/>
            <person name="Wang D."/>
            <person name="Dosanjh M."/>
            <person name="Hara H."/>
            <person name="Petrescu A."/>
            <person name="Morin R.D."/>
            <person name="Yang G."/>
            <person name="Stott J.M."/>
            <person name="Schein J.E."/>
            <person name="Shin H."/>
            <person name="Smailus D."/>
            <person name="Siddiqui A.S."/>
            <person name="Marra M.A."/>
            <person name="Jones S.J.M."/>
            <person name="Holt R."/>
            <person name="Brinkman F.S.L."/>
            <person name="Miyauchi K."/>
            <person name="Fukuda M."/>
            <person name="Davies J.E."/>
            <person name="Mohn W.W."/>
            <person name="Eltis L.D."/>
        </authorList>
    </citation>
    <scope>NUCLEOTIDE SEQUENCE [LARGE SCALE GENOMIC DNA]</scope>
    <source>
        <strain>RHA1</strain>
    </source>
</reference>
<dbReference type="EC" id="5.1.1.7" evidence="1"/>
<dbReference type="EMBL" id="CP000431">
    <property type="protein sequence ID" value="ABG98549.1"/>
    <property type="molecule type" value="Genomic_DNA"/>
</dbReference>
<dbReference type="RefSeq" id="WP_009480032.1">
    <property type="nucleotide sequence ID" value="NC_008268.1"/>
</dbReference>
<dbReference type="SMR" id="Q0S1N7"/>
<dbReference type="KEGG" id="rha:RHA1_ro06777"/>
<dbReference type="eggNOG" id="COG0253">
    <property type="taxonomic scope" value="Bacteria"/>
</dbReference>
<dbReference type="HOGENOM" id="CLU_053306_4_0_11"/>
<dbReference type="OrthoDB" id="9805408at2"/>
<dbReference type="UniPathway" id="UPA00034">
    <property type="reaction ID" value="UER00025"/>
</dbReference>
<dbReference type="Proteomes" id="UP000008710">
    <property type="component" value="Chromosome"/>
</dbReference>
<dbReference type="GO" id="GO:0005829">
    <property type="term" value="C:cytosol"/>
    <property type="evidence" value="ECO:0007669"/>
    <property type="project" value="TreeGrafter"/>
</dbReference>
<dbReference type="GO" id="GO:0008837">
    <property type="term" value="F:diaminopimelate epimerase activity"/>
    <property type="evidence" value="ECO:0007669"/>
    <property type="project" value="UniProtKB-UniRule"/>
</dbReference>
<dbReference type="GO" id="GO:0009089">
    <property type="term" value="P:lysine biosynthetic process via diaminopimelate"/>
    <property type="evidence" value="ECO:0007669"/>
    <property type="project" value="UniProtKB-UniRule"/>
</dbReference>
<dbReference type="Gene3D" id="3.10.310.10">
    <property type="entry name" value="Diaminopimelate Epimerase, Chain A, domain 1"/>
    <property type="match status" value="2"/>
</dbReference>
<dbReference type="HAMAP" id="MF_00197">
    <property type="entry name" value="DAP_epimerase"/>
    <property type="match status" value="1"/>
</dbReference>
<dbReference type="InterPro" id="IPR018510">
    <property type="entry name" value="DAP_epimerase_AS"/>
</dbReference>
<dbReference type="InterPro" id="IPR001653">
    <property type="entry name" value="DAP_epimerase_DapF"/>
</dbReference>
<dbReference type="NCBIfam" id="TIGR00652">
    <property type="entry name" value="DapF"/>
    <property type="match status" value="1"/>
</dbReference>
<dbReference type="PANTHER" id="PTHR31689:SF0">
    <property type="entry name" value="DIAMINOPIMELATE EPIMERASE"/>
    <property type="match status" value="1"/>
</dbReference>
<dbReference type="PANTHER" id="PTHR31689">
    <property type="entry name" value="DIAMINOPIMELATE EPIMERASE, CHLOROPLASTIC"/>
    <property type="match status" value="1"/>
</dbReference>
<dbReference type="Pfam" id="PF01678">
    <property type="entry name" value="DAP_epimerase"/>
    <property type="match status" value="2"/>
</dbReference>
<dbReference type="SUPFAM" id="SSF54506">
    <property type="entry name" value="Diaminopimelate epimerase-like"/>
    <property type="match status" value="2"/>
</dbReference>
<dbReference type="PROSITE" id="PS01326">
    <property type="entry name" value="DAP_EPIMERASE"/>
    <property type="match status" value="1"/>
</dbReference>
<accession>Q0S1N7</accession>
<name>DAPF_RHOJR</name>
<protein>
    <recommendedName>
        <fullName evidence="1">Diaminopimelate epimerase</fullName>
        <shortName evidence="1">DAP epimerase</shortName>
        <ecNumber evidence="1">5.1.1.7</ecNumber>
    </recommendedName>
    <alternativeName>
        <fullName evidence="1">PLP-independent amino acid racemase</fullName>
    </alternativeName>
</protein>
<organism>
    <name type="scientific">Rhodococcus jostii (strain RHA1)</name>
    <dbReference type="NCBI Taxonomy" id="101510"/>
    <lineage>
        <taxon>Bacteria</taxon>
        <taxon>Bacillati</taxon>
        <taxon>Actinomycetota</taxon>
        <taxon>Actinomycetes</taxon>
        <taxon>Mycobacteriales</taxon>
        <taxon>Nocardiaceae</taxon>
        <taxon>Rhodococcus</taxon>
    </lineage>
</organism>